<dbReference type="EC" id="2.8.1.8" evidence="1"/>
<dbReference type="EMBL" id="AE000516">
    <property type="protein sequence ID" value="AAK46560.1"/>
    <property type="molecule type" value="Genomic_DNA"/>
</dbReference>
<dbReference type="PIR" id="C70787">
    <property type="entry name" value="C70787"/>
</dbReference>
<dbReference type="RefSeq" id="WP_003411460.1">
    <property type="nucleotide sequence ID" value="NZ_KK341227.1"/>
</dbReference>
<dbReference type="SMR" id="P9WK90"/>
<dbReference type="GeneID" id="45426194"/>
<dbReference type="KEGG" id="mtc:MT2275"/>
<dbReference type="PATRIC" id="fig|83331.31.peg.2449"/>
<dbReference type="HOGENOM" id="CLU_033144_2_1_11"/>
<dbReference type="UniPathway" id="UPA00538">
    <property type="reaction ID" value="UER00593"/>
</dbReference>
<dbReference type="Proteomes" id="UP000001020">
    <property type="component" value="Chromosome"/>
</dbReference>
<dbReference type="GO" id="GO:0005737">
    <property type="term" value="C:cytoplasm"/>
    <property type="evidence" value="ECO:0007669"/>
    <property type="project" value="UniProtKB-SubCell"/>
</dbReference>
<dbReference type="GO" id="GO:0051539">
    <property type="term" value="F:4 iron, 4 sulfur cluster binding"/>
    <property type="evidence" value="ECO:0007669"/>
    <property type="project" value="UniProtKB-UniRule"/>
</dbReference>
<dbReference type="GO" id="GO:0016992">
    <property type="term" value="F:lipoate synthase activity"/>
    <property type="evidence" value="ECO:0007669"/>
    <property type="project" value="UniProtKB-UniRule"/>
</dbReference>
<dbReference type="GO" id="GO:0046872">
    <property type="term" value="F:metal ion binding"/>
    <property type="evidence" value="ECO:0007669"/>
    <property type="project" value="UniProtKB-KW"/>
</dbReference>
<dbReference type="CDD" id="cd01335">
    <property type="entry name" value="Radical_SAM"/>
    <property type="match status" value="1"/>
</dbReference>
<dbReference type="FunFam" id="3.20.20.70:FF:000116">
    <property type="entry name" value="Lipoyl synthase"/>
    <property type="match status" value="1"/>
</dbReference>
<dbReference type="Gene3D" id="3.20.20.70">
    <property type="entry name" value="Aldolase class I"/>
    <property type="match status" value="1"/>
</dbReference>
<dbReference type="HAMAP" id="MF_00206">
    <property type="entry name" value="Lipoyl_synth"/>
    <property type="match status" value="1"/>
</dbReference>
<dbReference type="InterPro" id="IPR013785">
    <property type="entry name" value="Aldolase_TIM"/>
</dbReference>
<dbReference type="InterPro" id="IPR006638">
    <property type="entry name" value="Elp3/MiaA/NifB-like_rSAM"/>
</dbReference>
<dbReference type="InterPro" id="IPR031691">
    <property type="entry name" value="LIAS_N"/>
</dbReference>
<dbReference type="InterPro" id="IPR003698">
    <property type="entry name" value="Lipoyl_synth"/>
</dbReference>
<dbReference type="InterPro" id="IPR007197">
    <property type="entry name" value="rSAM"/>
</dbReference>
<dbReference type="NCBIfam" id="TIGR00510">
    <property type="entry name" value="lipA"/>
    <property type="match status" value="1"/>
</dbReference>
<dbReference type="NCBIfam" id="NF004019">
    <property type="entry name" value="PRK05481.1"/>
    <property type="match status" value="1"/>
</dbReference>
<dbReference type="NCBIfam" id="NF009544">
    <property type="entry name" value="PRK12928.1"/>
    <property type="match status" value="1"/>
</dbReference>
<dbReference type="PANTHER" id="PTHR10949">
    <property type="entry name" value="LIPOYL SYNTHASE"/>
    <property type="match status" value="1"/>
</dbReference>
<dbReference type="PANTHER" id="PTHR10949:SF0">
    <property type="entry name" value="LIPOYL SYNTHASE, MITOCHONDRIAL"/>
    <property type="match status" value="1"/>
</dbReference>
<dbReference type="Pfam" id="PF16881">
    <property type="entry name" value="LIAS_N"/>
    <property type="match status" value="1"/>
</dbReference>
<dbReference type="Pfam" id="PF04055">
    <property type="entry name" value="Radical_SAM"/>
    <property type="match status" value="1"/>
</dbReference>
<dbReference type="PIRSF" id="PIRSF005963">
    <property type="entry name" value="Lipoyl_synth"/>
    <property type="match status" value="1"/>
</dbReference>
<dbReference type="SFLD" id="SFLDF00271">
    <property type="entry name" value="lipoyl_synthase"/>
    <property type="match status" value="1"/>
</dbReference>
<dbReference type="SFLD" id="SFLDS00029">
    <property type="entry name" value="Radical_SAM"/>
    <property type="match status" value="1"/>
</dbReference>
<dbReference type="SMART" id="SM00729">
    <property type="entry name" value="Elp3"/>
    <property type="match status" value="1"/>
</dbReference>
<dbReference type="SUPFAM" id="SSF102114">
    <property type="entry name" value="Radical SAM enzymes"/>
    <property type="match status" value="1"/>
</dbReference>
<dbReference type="PROSITE" id="PS51918">
    <property type="entry name" value="RADICAL_SAM"/>
    <property type="match status" value="1"/>
</dbReference>
<reference key="1">
    <citation type="journal article" date="2002" name="J. Bacteriol.">
        <title>Whole-genome comparison of Mycobacterium tuberculosis clinical and laboratory strains.</title>
        <authorList>
            <person name="Fleischmann R.D."/>
            <person name="Alland D."/>
            <person name="Eisen J.A."/>
            <person name="Carpenter L."/>
            <person name="White O."/>
            <person name="Peterson J.D."/>
            <person name="DeBoy R.T."/>
            <person name="Dodson R.J."/>
            <person name="Gwinn M.L."/>
            <person name="Haft D.H."/>
            <person name="Hickey E.K."/>
            <person name="Kolonay J.F."/>
            <person name="Nelson W.C."/>
            <person name="Umayam L.A."/>
            <person name="Ermolaeva M.D."/>
            <person name="Salzberg S.L."/>
            <person name="Delcher A."/>
            <person name="Utterback T.R."/>
            <person name="Weidman J.F."/>
            <person name="Khouri H.M."/>
            <person name="Gill J."/>
            <person name="Mikula A."/>
            <person name="Bishai W."/>
            <person name="Jacobs W.R. Jr."/>
            <person name="Venter J.C."/>
            <person name="Fraser C.M."/>
        </authorList>
    </citation>
    <scope>NUCLEOTIDE SEQUENCE [LARGE SCALE GENOMIC DNA]</scope>
    <source>
        <strain>CDC 1551 / Oshkosh</strain>
    </source>
</reference>
<comment type="function">
    <text evidence="1">Catalyzes the radical-mediated insertion of two sulfur atoms into the C-6 and C-8 positions of the octanoyl moiety bound to the lipoyl domains of lipoate-dependent enzymes, thereby converting the octanoylated domains into lipoylated derivatives.</text>
</comment>
<comment type="catalytic activity">
    <reaction evidence="1">
        <text>[[Fe-S] cluster scaffold protein carrying a second [4Fe-4S](2+) cluster] + N(6)-octanoyl-L-lysyl-[protein] + 2 oxidized [2Fe-2S]-[ferredoxin] + 2 S-adenosyl-L-methionine + 4 H(+) = [[Fe-S] cluster scaffold protein] + N(6)-[(R)-dihydrolipoyl]-L-lysyl-[protein] + 4 Fe(3+) + 2 hydrogen sulfide + 2 5'-deoxyadenosine + 2 L-methionine + 2 reduced [2Fe-2S]-[ferredoxin]</text>
        <dbReference type="Rhea" id="RHEA:16585"/>
        <dbReference type="Rhea" id="RHEA-COMP:9928"/>
        <dbReference type="Rhea" id="RHEA-COMP:10000"/>
        <dbReference type="Rhea" id="RHEA-COMP:10001"/>
        <dbReference type="Rhea" id="RHEA-COMP:10475"/>
        <dbReference type="Rhea" id="RHEA-COMP:14568"/>
        <dbReference type="Rhea" id="RHEA-COMP:14569"/>
        <dbReference type="ChEBI" id="CHEBI:15378"/>
        <dbReference type="ChEBI" id="CHEBI:17319"/>
        <dbReference type="ChEBI" id="CHEBI:29034"/>
        <dbReference type="ChEBI" id="CHEBI:29919"/>
        <dbReference type="ChEBI" id="CHEBI:33722"/>
        <dbReference type="ChEBI" id="CHEBI:33737"/>
        <dbReference type="ChEBI" id="CHEBI:33738"/>
        <dbReference type="ChEBI" id="CHEBI:57844"/>
        <dbReference type="ChEBI" id="CHEBI:59789"/>
        <dbReference type="ChEBI" id="CHEBI:78809"/>
        <dbReference type="ChEBI" id="CHEBI:83100"/>
        <dbReference type="EC" id="2.8.1.8"/>
    </reaction>
</comment>
<comment type="cofactor">
    <cofactor evidence="1">
        <name>[4Fe-4S] cluster</name>
        <dbReference type="ChEBI" id="CHEBI:49883"/>
    </cofactor>
    <text evidence="1">Binds 2 [4Fe-4S] clusters per subunit. One cluster is coordinated with 3 cysteines and an exchangeable S-adenosyl-L-methionine.</text>
</comment>
<comment type="pathway">
    <text evidence="1">Protein modification; protein lipoylation via endogenous pathway; protein N(6)-(lipoyl)lysine from octanoyl-[acyl-carrier-protein]: step 2/2.</text>
</comment>
<comment type="subcellular location">
    <subcellularLocation>
        <location evidence="1">Cytoplasm</location>
    </subcellularLocation>
</comment>
<comment type="similarity">
    <text evidence="1">Belongs to the radical SAM superfamily. Lipoyl synthase family.</text>
</comment>
<name>LIPA_MYCTO</name>
<proteinExistence type="inferred from homology"/>
<protein>
    <recommendedName>
        <fullName evidence="1">Lipoyl synthase</fullName>
        <ecNumber evidence="1">2.8.1.8</ecNumber>
    </recommendedName>
    <alternativeName>
        <fullName evidence="1">Lip-syn</fullName>
        <shortName evidence="1">LS</shortName>
    </alternativeName>
    <alternativeName>
        <fullName evidence="1">Lipoate synthase</fullName>
    </alternativeName>
    <alternativeName>
        <fullName evidence="1">Lipoic acid synthase</fullName>
    </alternativeName>
    <alternativeName>
        <fullName evidence="1">Sulfur insertion protein LipA</fullName>
    </alternativeName>
</protein>
<gene>
    <name evidence="1" type="primary">lipA</name>
    <name type="ordered locus">MT2275</name>
</gene>
<accession>P9WK90</accession>
<accession>L0T964</accession>
<accession>P65283</accession>
<accession>Q10380</accession>
<feature type="chain" id="PRO_0000427695" description="Lipoyl synthase">
    <location>
        <begin position="1"/>
        <end position="311"/>
    </location>
</feature>
<feature type="domain" description="Radical SAM core" evidence="2">
    <location>
        <begin position="67"/>
        <end position="281"/>
    </location>
</feature>
<feature type="binding site" evidence="1">
    <location>
        <position position="55"/>
    </location>
    <ligand>
        <name>[4Fe-4S] cluster</name>
        <dbReference type="ChEBI" id="CHEBI:49883"/>
        <label>1</label>
    </ligand>
</feature>
<feature type="binding site" evidence="1">
    <location>
        <position position="60"/>
    </location>
    <ligand>
        <name>[4Fe-4S] cluster</name>
        <dbReference type="ChEBI" id="CHEBI:49883"/>
        <label>1</label>
    </ligand>
</feature>
<feature type="binding site" evidence="1">
    <location>
        <position position="66"/>
    </location>
    <ligand>
        <name>[4Fe-4S] cluster</name>
        <dbReference type="ChEBI" id="CHEBI:49883"/>
        <label>1</label>
    </ligand>
</feature>
<feature type="binding site" evidence="1">
    <location>
        <position position="81"/>
    </location>
    <ligand>
        <name>[4Fe-4S] cluster</name>
        <dbReference type="ChEBI" id="CHEBI:49883"/>
        <label>2</label>
        <note>4Fe-4S-S-AdoMet</note>
    </ligand>
</feature>
<feature type="binding site" evidence="1">
    <location>
        <position position="85"/>
    </location>
    <ligand>
        <name>[4Fe-4S] cluster</name>
        <dbReference type="ChEBI" id="CHEBI:49883"/>
        <label>2</label>
        <note>4Fe-4S-S-AdoMet</note>
    </ligand>
</feature>
<feature type="binding site" evidence="1">
    <location>
        <position position="88"/>
    </location>
    <ligand>
        <name>[4Fe-4S] cluster</name>
        <dbReference type="ChEBI" id="CHEBI:49883"/>
        <label>2</label>
        <note>4Fe-4S-S-AdoMet</note>
    </ligand>
</feature>
<feature type="binding site" evidence="1">
    <location>
        <position position="292"/>
    </location>
    <ligand>
        <name>[4Fe-4S] cluster</name>
        <dbReference type="ChEBI" id="CHEBI:49883"/>
        <label>1</label>
    </ligand>
</feature>
<organism>
    <name type="scientific">Mycobacterium tuberculosis (strain CDC 1551 / Oshkosh)</name>
    <dbReference type="NCBI Taxonomy" id="83331"/>
    <lineage>
        <taxon>Bacteria</taxon>
        <taxon>Bacillati</taxon>
        <taxon>Actinomycetota</taxon>
        <taxon>Actinomycetes</taxon>
        <taxon>Mycobacteriales</taxon>
        <taxon>Mycobacteriaceae</taxon>
        <taxon>Mycobacterium</taxon>
        <taxon>Mycobacterium tuberculosis complex</taxon>
    </lineage>
</organism>
<evidence type="ECO:0000255" key="1">
    <source>
        <dbReference type="HAMAP-Rule" id="MF_00206"/>
    </source>
</evidence>
<evidence type="ECO:0000255" key="2">
    <source>
        <dbReference type="PROSITE-ProRule" id="PRU01266"/>
    </source>
</evidence>
<keyword id="KW-0004">4Fe-4S</keyword>
<keyword id="KW-0963">Cytoplasm</keyword>
<keyword id="KW-0408">Iron</keyword>
<keyword id="KW-0411">Iron-sulfur</keyword>
<keyword id="KW-0479">Metal-binding</keyword>
<keyword id="KW-1185">Reference proteome</keyword>
<keyword id="KW-0949">S-adenosyl-L-methionine</keyword>
<keyword id="KW-0808">Transferase</keyword>
<sequence>MSVAAEGRRLLRLEVRNAQTPIERKPPWIKTRARIGPEYTELKNLVRREGLHTVCEEAGCPNIFECWEDREATFLIGGDQCTRRCDFCQIDTGKPAELDRDEPRRVADSVRTMGLRYATVTGVARDDLPDGGAWLYAATVRAIKELNPSTGVELLIPDFNGEPTRLAEVFESGPEVLAHNVETVPRIFKRIRPAFTYRRSLGVLTAARDAGLVTKSNLILGLGETSDEVRTALGDLRDAGCDIVTITQYLRPSARHHPVERWVKPEEFVQFARFAEGLGFAGVLAGPLVRSSYRAGRLYEQARNSRALASR</sequence>